<name>LAC2D_CERUI</name>
<organism>
    <name type="scientific">Cerrena unicolor</name>
    <name type="common">Canker rot fungus</name>
    <name type="synonym">Daedalea unicolor</name>
    <dbReference type="NCBI Taxonomy" id="90312"/>
    <lineage>
        <taxon>Eukaryota</taxon>
        <taxon>Fungi</taxon>
        <taxon>Dikarya</taxon>
        <taxon>Basidiomycota</taxon>
        <taxon>Agaricomycotina</taxon>
        <taxon>Agaricomycetes</taxon>
        <taxon>Polyporales</taxon>
        <taxon>Cerrenaceae</taxon>
        <taxon>Cerrena</taxon>
    </lineage>
</organism>
<accession>P85430</accession>
<comment type="function">
    <text evidence="2 5">Lignin degradation and detoxification of lignin-derived products (By similarity). Has highest activity towards ABTS, also active towards ferulic acid and guaiacol, but is not active towards tyrosine, vanillic acid, 2,5-dimethyl aniline, p-anisidine or violuric acid (PubMed:19283431).</text>
</comment>
<comment type="catalytic activity">
    <reaction evidence="5">
        <text>4 hydroquinone + O2 = 4 benzosemiquinone + 2 H2O</text>
        <dbReference type="Rhea" id="RHEA:11276"/>
        <dbReference type="ChEBI" id="CHEBI:15377"/>
        <dbReference type="ChEBI" id="CHEBI:15379"/>
        <dbReference type="ChEBI" id="CHEBI:17594"/>
        <dbReference type="ChEBI" id="CHEBI:17977"/>
        <dbReference type="EC" id="1.10.3.2"/>
    </reaction>
</comment>
<comment type="cofactor">
    <cofactor evidence="1">
        <name>Cu cation</name>
        <dbReference type="ChEBI" id="CHEBI:23378"/>
    </cofactor>
    <text evidence="1">Binds 4 Cu cations per monomer.</text>
</comment>
<comment type="activity regulation">
    <text evidence="5">Inhibited by sodium azide, SDS and mercaptoethanol, but not by 4-hexyl resocinol, L-cysteine and dithiothreitol. Activity is inhibited by the heavy metal ions Cr, W, Sn, Ag(+) and Hg(2+), but not by Pb(2+), Fe(3+), Ni(2+), Li(2+), Co(2+) or Cd(2+).</text>
</comment>
<comment type="biophysicochemical properties">
    <kinetics>
        <KM evidence="5">54.1 uM for ABTS (at 70 degrees Celsius)</KM>
        <KM evidence="5">57.1 uM for ABTS (at 30 degrees Celsius)</KM>
        <KM evidence="5">19.2 uM for syringaldizine (at 30 degrees Celsius)</KM>
    </kinetics>
    <phDependence>
        <text evidence="5">Optimum pH is 3.0 at 70 degrees Celsius with ABTS as substrate, and 6.0 with guaiacol and syringaldazine as substrate.</text>
    </phDependence>
    <temperatureDependence>
        <text evidence="5">Optimum temperature is 70 degrees Celsius at pH 3.0 with ABTS as substrate. Retains 100% of its activity after 1 hour at 30 degrees Celsius at pH 9.0. Retains more than 60% of its activity after 180 minutes at 60 degrees Celsius at pH 9.0. Retains approximately 50% of its activity after 90 minutes at 70 degrees Celsius at pH 9.0.</text>
    </temperatureDependence>
</comment>
<comment type="subunit">
    <text evidence="3">Homodimer.</text>
</comment>
<comment type="subcellular location">
    <subcellularLocation>
        <location evidence="7">Secreted</location>
    </subcellularLocation>
</comment>
<comment type="PTM">
    <text evidence="5">N-glycosylated; contains 17% carbohydrates.</text>
</comment>
<comment type="miscellaneous">
    <text evidence="5">On the 2D-gel the determined pI of this protein is: 5.3, its MW is: 59 kDa.</text>
</comment>
<comment type="similarity">
    <text evidence="4">Belongs to the multicopper oxidase family.</text>
</comment>
<feature type="chain" id="PRO_0000320022" description="Laccase-2d">
    <location>
        <begin position="1"/>
        <end position="47" status="greater than"/>
    </location>
</feature>
<feature type="domain" description="Plastocyanin-like" evidence="4">
    <location>
        <begin position="2"/>
        <end position="47" status="greater than"/>
    </location>
</feature>
<feature type="non-consecutive residues" evidence="6">
    <location>
        <begin position="30"/>
        <end position="31"/>
    </location>
</feature>
<feature type="non-terminal residue" evidence="6">
    <location>
        <position position="47"/>
    </location>
</feature>
<sequence>GTGPVADLHIINKDLSPDGFQRPTVVAGGGRDVVSIGRAGDNVTIRF</sequence>
<reference evidence="7" key="1">
    <citation type="journal article" date="2009" name="Mar. Biotechnol.">
        <title>A thermostable metal-tolerant laccase with bioremediation potential from a marine-derived fungus.</title>
        <authorList>
            <person name="D'Souza-Ticlo D."/>
            <person name="Sharma D."/>
            <person name="Raghukumar C."/>
        </authorList>
    </citation>
    <scope>PROTEIN SEQUENCE</scope>
    <scope>FUNCTION</scope>
    <scope>CATALYTIC ACTIVITY</scope>
    <scope>ACTIVITY REGULATION</scope>
    <scope>BIOPHYSICOCHEMICAL PROPERTIES</scope>
    <scope>GLYCOSYLATION</scope>
    <source>
        <strain evidence="5">MTCC 5159</strain>
    </source>
</reference>
<proteinExistence type="evidence at protein level"/>
<protein>
    <recommendedName>
        <fullName evidence="6">Laccase-2d</fullName>
        <ecNumber evidence="5">1.10.3.2</ecNumber>
    </recommendedName>
    <alternativeName>
        <fullName evidence="3">Benzenediol:oxygen oxidoreductase</fullName>
    </alternativeName>
    <alternativeName>
        <fullName evidence="3">Diphenol oxidase</fullName>
    </alternativeName>
    <alternativeName>
        <fullName evidence="6">Laccase-IId</fullName>
        <shortName evidence="6">Lac-IId</shortName>
    </alternativeName>
    <alternativeName>
        <fullName evidence="3">Urishiol oxidase</fullName>
    </alternativeName>
</protein>
<dbReference type="EC" id="1.10.3.2" evidence="5"/>
<dbReference type="SMR" id="P85430"/>
<dbReference type="GO" id="GO:0005576">
    <property type="term" value="C:extracellular region"/>
    <property type="evidence" value="ECO:0007669"/>
    <property type="project" value="UniProtKB-SubCell"/>
</dbReference>
<dbReference type="GO" id="GO:0052716">
    <property type="term" value="F:hydroquinone:oxygen oxidoreductase activity"/>
    <property type="evidence" value="ECO:0007669"/>
    <property type="project" value="UniProtKB-EC"/>
</dbReference>
<dbReference type="GO" id="GO:0046872">
    <property type="term" value="F:metal ion binding"/>
    <property type="evidence" value="ECO:0007669"/>
    <property type="project" value="UniProtKB-KW"/>
</dbReference>
<dbReference type="GO" id="GO:0046274">
    <property type="term" value="P:lignin catabolic process"/>
    <property type="evidence" value="ECO:0007669"/>
    <property type="project" value="UniProtKB-KW"/>
</dbReference>
<keyword id="KW-0186">Copper</keyword>
<keyword id="KW-0903">Direct protein sequencing</keyword>
<keyword id="KW-0325">Glycoprotein</keyword>
<keyword id="KW-0439">Lignin degradation</keyword>
<keyword id="KW-0479">Metal-binding</keyword>
<keyword id="KW-0560">Oxidoreductase</keyword>
<keyword id="KW-0677">Repeat</keyword>
<keyword id="KW-0964">Secreted</keyword>
<evidence type="ECO:0000250" key="1">
    <source>
        <dbReference type="UniProtKB" id="Q12718"/>
    </source>
</evidence>
<evidence type="ECO:0000250" key="2">
    <source>
        <dbReference type="UniProtKB" id="Q70KY3"/>
    </source>
</evidence>
<evidence type="ECO:0000250" key="3">
    <source>
        <dbReference type="UniProtKB" id="Q99044"/>
    </source>
</evidence>
<evidence type="ECO:0000255" key="4"/>
<evidence type="ECO:0000269" key="5">
    <source>
    </source>
</evidence>
<evidence type="ECO:0000303" key="6">
    <source>
    </source>
</evidence>
<evidence type="ECO:0000305" key="7"/>